<evidence type="ECO:0000250" key="1">
    <source>
        <dbReference type="UniProtKB" id="Q5ZV56"/>
    </source>
</evidence>
<evidence type="ECO:0000250" key="2">
    <source>
        <dbReference type="UniProtKB" id="Q9KJY8"/>
    </source>
</evidence>
<evidence type="ECO:0000255" key="3"/>
<evidence type="ECO:0000269" key="4">
    <source>
    </source>
</evidence>
<evidence type="ECO:0000303" key="5">
    <source>
    </source>
</evidence>
<evidence type="ECO:0000305" key="6"/>
<evidence type="ECO:0000312" key="7">
    <source>
        <dbReference type="EMBL" id="ADE20140.1"/>
    </source>
</evidence>
<accession>D5KX81</accession>
<feature type="chain" id="PRO_0000425220" description="Phosphatidylcholine synthase">
    <location>
        <begin position="1" status="less than"/>
        <end position="217" status="greater than"/>
    </location>
</feature>
<feature type="transmembrane region" description="Helical; Name=1" evidence="3">
    <location>
        <begin position="1" status="less than"/>
        <end position="8"/>
    </location>
</feature>
<feature type="topological domain" description="Periplasmic" evidence="1 6">
    <location>
        <begin position="9"/>
        <end position="16"/>
    </location>
</feature>
<feature type="transmembrane region" description="Helical; Name=2" evidence="1 6">
    <location>
        <begin position="17"/>
        <end position="37"/>
    </location>
</feature>
<feature type="topological domain" description="Cytoplasmic" evidence="1 6">
    <location>
        <begin position="38"/>
        <end position="50"/>
    </location>
</feature>
<feature type="transmembrane region" description="Helical; Name=3" evidence="1 6">
    <location>
        <begin position="51"/>
        <end position="71"/>
    </location>
</feature>
<feature type="topological domain" description="Periplasmic" evidence="1 6">
    <location>
        <begin position="72"/>
        <end position="77"/>
    </location>
</feature>
<feature type="transmembrane region" description="Helical; Name=4" evidence="1 6">
    <location>
        <begin position="78"/>
        <end position="98"/>
    </location>
</feature>
<feature type="topological domain" description="Cytoplasmic" evidence="1 6">
    <location>
        <begin position="99"/>
        <end position="107"/>
    </location>
</feature>
<feature type="transmembrane region" description="Helical; Name=5" evidence="1 6">
    <location>
        <begin position="108"/>
        <end position="128"/>
    </location>
</feature>
<feature type="topological domain" description="Periplasmic" evidence="1 6">
    <location>
        <position position="129"/>
    </location>
</feature>
<feature type="transmembrane region" description="Helical; Name=6" evidence="1 6">
    <location>
        <begin position="130"/>
        <end position="149"/>
    </location>
</feature>
<feature type="topological domain" description="Cytoplasmic" evidence="1 6">
    <location>
        <begin position="150"/>
        <end position="164"/>
    </location>
</feature>
<feature type="transmembrane region" description="Helical; Name=7" evidence="1 6">
    <location>
        <begin position="165"/>
        <end position="185"/>
    </location>
</feature>
<feature type="topological domain" description="Periplasmic" evidence="1 6">
    <location>
        <begin position="186"/>
        <end position="191"/>
    </location>
</feature>
<feature type="transmembrane region" description="Helical; Name=8" evidence="1 6">
    <location>
        <begin position="192"/>
        <end position="212"/>
    </location>
</feature>
<feature type="topological domain" description="Cytoplasmic" evidence="1 2 6">
    <location>
        <begin position="213"/>
        <end position="217" status="greater than"/>
    </location>
</feature>
<feature type="non-terminal residue" evidence="7">
    <location>
        <position position="1"/>
    </location>
</feature>
<feature type="non-terminal residue" evidence="7">
    <location>
        <position position="217"/>
    </location>
</feature>
<gene>
    <name evidence="7" type="primary">pcsA</name>
</gene>
<name>PCS_LEGBO</name>
<dbReference type="EC" id="2.7.8.24" evidence="4"/>
<dbReference type="EMBL" id="GU647106">
    <property type="protein sequence ID" value="ADE20140.1"/>
    <property type="molecule type" value="Genomic_DNA"/>
</dbReference>
<dbReference type="SMR" id="D5KX81"/>
<dbReference type="STRING" id="447.Lboz_0037"/>
<dbReference type="BRENDA" id="2.7.8.24">
    <property type="organism ID" value="13323"/>
</dbReference>
<dbReference type="GO" id="GO:0005886">
    <property type="term" value="C:plasma membrane"/>
    <property type="evidence" value="ECO:0007669"/>
    <property type="project" value="UniProtKB-SubCell"/>
</dbReference>
<dbReference type="GO" id="GO:0050520">
    <property type="term" value="F:phosphatidylcholine synthase activity"/>
    <property type="evidence" value="ECO:0007669"/>
    <property type="project" value="UniProtKB-EC"/>
</dbReference>
<dbReference type="GO" id="GO:0008654">
    <property type="term" value="P:phospholipid biosynthetic process"/>
    <property type="evidence" value="ECO:0007669"/>
    <property type="project" value="UniProtKB-KW"/>
</dbReference>
<dbReference type="Gene3D" id="1.20.120.1760">
    <property type="match status" value="1"/>
</dbReference>
<dbReference type="InterPro" id="IPR000462">
    <property type="entry name" value="CDP-OH_P_trans"/>
</dbReference>
<dbReference type="InterPro" id="IPR043130">
    <property type="entry name" value="CDP-OH_PTrfase_TM_dom"/>
</dbReference>
<dbReference type="InterPro" id="IPR026027">
    <property type="entry name" value="PcS"/>
</dbReference>
<dbReference type="Pfam" id="PF01066">
    <property type="entry name" value="CDP-OH_P_transf"/>
    <property type="match status" value="1"/>
</dbReference>
<dbReference type="PIRSF" id="PIRSF000851">
    <property type="entry name" value="PcS"/>
    <property type="match status" value="1"/>
</dbReference>
<reference evidence="6 7" key="1">
    <citation type="journal article" date="2011" name="Microbiol. Res.">
        <title>Legionella bozemanae synthesizes phosphatidylcholine from exogenous choline.</title>
        <authorList>
            <person name="Palusinska-Szysz M."/>
            <person name="Janczarek M."/>
            <person name="Kalitynski R."/>
            <person name="Dawidowicz A.L."/>
            <person name="Russa R."/>
        </authorList>
    </citation>
    <scope>NUCLEOTIDE SEQUENCE [GENOMIC DNA]</scope>
    <scope>FUNCTION</scope>
    <scope>CATALYTIC ACTIVITY</scope>
    <source>
        <strain evidence="7">ATCC 33217 / DSM 16523 / CCUG 11880 / NCTC 11368 / ALLO1 / WIGA</strain>
    </source>
</reference>
<organism>
    <name type="scientific">Legionella bozemanae</name>
    <name type="common">Fluoribacter bozemanae</name>
    <dbReference type="NCBI Taxonomy" id="447"/>
    <lineage>
        <taxon>Bacteria</taxon>
        <taxon>Pseudomonadati</taxon>
        <taxon>Pseudomonadota</taxon>
        <taxon>Gammaproteobacteria</taxon>
        <taxon>Legionellales</taxon>
        <taxon>Legionellaceae</taxon>
        <taxon>Legionella</taxon>
    </lineage>
</organism>
<protein>
    <recommendedName>
        <fullName evidence="5 7">Phosphatidylcholine synthase</fullName>
        <shortName evidence="2">PC synthase</shortName>
        <shortName evidence="5">PCS</shortName>
        <ecNumber evidence="4">2.7.8.24</ecNumber>
    </recommendedName>
    <alternativeName>
        <fullName evidence="2">CDP-diglyceride-choline O-phosphatidyltransferase</fullName>
    </alternativeName>
</protein>
<comment type="function">
    <text evidence="4">Condenses choline with CDP-diglyceride to produce phosphatidylcholine and CMP.</text>
</comment>
<comment type="catalytic activity">
    <reaction evidence="4">
        <text>a CDP-1,2-diacyl-sn-glycerol + choline = a 1,2-diacyl-sn-glycero-3-phosphocholine + CMP + H(+)</text>
        <dbReference type="Rhea" id="RHEA:14597"/>
        <dbReference type="ChEBI" id="CHEBI:15354"/>
        <dbReference type="ChEBI" id="CHEBI:15378"/>
        <dbReference type="ChEBI" id="CHEBI:57643"/>
        <dbReference type="ChEBI" id="CHEBI:58332"/>
        <dbReference type="ChEBI" id="CHEBI:60377"/>
        <dbReference type="EC" id="2.7.8.24"/>
    </reaction>
</comment>
<comment type="cofactor">
    <cofactor evidence="2">
        <name>Mn(2+)</name>
        <dbReference type="ChEBI" id="CHEBI:29035"/>
    </cofactor>
</comment>
<comment type="subcellular location">
    <subcellularLocation>
        <location evidence="2">Cell inner membrane</location>
        <topology evidence="2">Multi-pass membrane protein</topology>
    </subcellularLocation>
</comment>
<comment type="similarity">
    <text evidence="3">Belongs to the CDP-alcohol phosphatidyltransferase class-I family.</text>
</comment>
<proteinExistence type="evidence at protein level"/>
<keyword id="KW-0997">Cell inner membrane</keyword>
<keyword id="KW-1003">Cell membrane</keyword>
<keyword id="KW-0444">Lipid biosynthesis</keyword>
<keyword id="KW-0443">Lipid metabolism</keyword>
<keyword id="KW-0464">Manganese</keyword>
<keyword id="KW-0472">Membrane</keyword>
<keyword id="KW-0594">Phospholipid biosynthesis</keyword>
<keyword id="KW-1208">Phospholipid metabolism</keyword>
<keyword id="KW-0808">Transferase</keyword>
<keyword id="KW-0812">Transmembrane</keyword>
<keyword id="KW-1133">Transmembrane helix</keyword>
<sequence length="217" mass="24771">ACIGVFSLVKIYQHEYIFALWLMFITVVIDAVDGTLARLVNIKKILPKIDGALLDNIVDYLNYVITPCFFLLVKPGMLPPEYSVFLIAAVSITSAYQFCQCDAKTPDHFFKGFPCYWNITILYMFIFNTSAATNAIILIILSILIFVPVKYVYPSRLDYLTESRILKILMHICSIIYAVSSICILISYPNTNIICLSLSVAYVGMYLFLSFYRTYYP</sequence>